<feature type="chain" id="PRO_1000040600" description="3,4-dihydroxy-2-butanone 4-phosphate synthase">
    <location>
        <begin position="1"/>
        <end position="213"/>
    </location>
</feature>
<feature type="binding site" evidence="1">
    <location>
        <begin position="37"/>
        <end position="38"/>
    </location>
    <ligand>
        <name>D-ribulose 5-phosphate</name>
        <dbReference type="ChEBI" id="CHEBI:58121"/>
    </ligand>
</feature>
<feature type="binding site" evidence="1">
    <location>
        <position position="38"/>
    </location>
    <ligand>
        <name>Mg(2+)</name>
        <dbReference type="ChEBI" id="CHEBI:18420"/>
        <label>1</label>
    </ligand>
</feature>
<feature type="binding site" evidence="1">
    <location>
        <position position="38"/>
    </location>
    <ligand>
        <name>Mg(2+)</name>
        <dbReference type="ChEBI" id="CHEBI:18420"/>
        <label>2</label>
    </ligand>
</feature>
<feature type="binding site" evidence="1">
    <location>
        <position position="42"/>
    </location>
    <ligand>
        <name>D-ribulose 5-phosphate</name>
        <dbReference type="ChEBI" id="CHEBI:58121"/>
    </ligand>
</feature>
<feature type="binding site" evidence="1">
    <location>
        <begin position="150"/>
        <end position="154"/>
    </location>
    <ligand>
        <name>D-ribulose 5-phosphate</name>
        <dbReference type="ChEBI" id="CHEBI:58121"/>
    </ligand>
</feature>
<feature type="binding site" evidence="1">
    <location>
        <position position="153"/>
    </location>
    <ligand>
        <name>Mg(2+)</name>
        <dbReference type="ChEBI" id="CHEBI:18420"/>
        <label>2</label>
    </ligand>
</feature>
<feature type="binding site" evidence="1">
    <location>
        <position position="174"/>
    </location>
    <ligand>
        <name>D-ribulose 5-phosphate</name>
        <dbReference type="ChEBI" id="CHEBI:58121"/>
    </ligand>
</feature>
<feature type="site" description="Essential for catalytic activity" evidence="1">
    <location>
        <position position="136"/>
    </location>
</feature>
<feature type="site" description="Essential for catalytic activity" evidence="1">
    <location>
        <position position="174"/>
    </location>
</feature>
<evidence type="ECO:0000255" key="1">
    <source>
        <dbReference type="HAMAP-Rule" id="MF_00180"/>
    </source>
</evidence>
<proteinExistence type="inferred from homology"/>
<comment type="function">
    <text evidence="1">Catalyzes the conversion of D-ribulose 5-phosphate to formate and 3,4-dihydroxy-2-butanone 4-phosphate.</text>
</comment>
<comment type="catalytic activity">
    <reaction evidence="1">
        <text>D-ribulose 5-phosphate = (2S)-2-hydroxy-3-oxobutyl phosphate + formate + H(+)</text>
        <dbReference type="Rhea" id="RHEA:18457"/>
        <dbReference type="ChEBI" id="CHEBI:15378"/>
        <dbReference type="ChEBI" id="CHEBI:15740"/>
        <dbReference type="ChEBI" id="CHEBI:58121"/>
        <dbReference type="ChEBI" id="CHEBI:58830"/>
        <dbReference type="EC" id="4.1.99.12"/>
    </reaction>
</comment>
<comment type="cofactor">
    <cofactor evidence="1">
        <name>Mg(2+)</name>
        <dbReference type="ChEBI" id="CHEBI:18420"/>
    </cofactor>
    <cofactor evidence="1">
        <name>Mn(2+)</name>
        <dbReference type="ChEBI" id="CHEBI:29035"/>
    </cofactor>
    <text evidence="1">Binds 2 divalent metal cations per subunit. Magnesium or manganese.</text>
</comment>
<comment type="pathway">
    <text evidence="1">Cofactor biosynthesis; riboflavin biosynthesis; 2-hydroxy-3-oxobutyl phosphate from D-ribulose 5-phosphate: step 1/1.</text>
</comment>
<comment type="subunit">
    <text evidence="1">Homodimer.</text>
</comment>
<comment type="similarity">
    <text evidence="1">Belongs to the DHBP synthase family.</text>
</comment>
<dbReference type="EC" id="4.1.99.12" evidence="1"/>
<dbReference type="EMBL" id="CP000728">
    <property type="protein sequence ID" value="ABS40946.1"/>
    <property type="molecule type" value="Genomic_DNA"/>
</dbReference>
<dbReference type="RefSeq" id="WP_012100704.1">
    <property type="nucleotide sequence ID" value="NC_009699.1"/>
</dbReference>
<dbReference type="SMR" id="A7GHE0"/>
<dbReference type="KEGG" id="cbf:CLI_2975"/>
<dbReference type="HOGENOM" id="CLU_020273_3_0_9"/>
<dbReference type="UniPathway" id="UPA00275">
    <property type="reaction ID" value="UER00399"/>
</dbReference>
<dbReference type="Proteomes" id="UP000002410">
    <property type="component" value="Chromosome"/>
</dbReference>
<dbReference type="GO" id="GO:0005829">
    <property type="term" value="C:cytosol"/>
    <property type="evidence" value="ECO:0007669"/>
    <property type="project" value="TreeGrafter"/>
</dbReference>
<dbReference type="GO" id="GO:0008686">
    <property type="term" value="F:3,4-dihydroxy-2-butanone-4-phosphate synthase activity"/>
    <property type="evidence" value="ECO:0007669"/>
    <property type="project" value="UniProtKB-UniRule"/>
</dbReference>
<dbReference type="GO" id="GO:0000287">
    <property type="term" value="F:magnesium ion binding"/>
    <property type="evidence" value="ECO:0007669"/>
    <property type="project" value="UniProtKB-UniRule"/>
</dbReference>
<dbReference type="GO" id="GO:0030145">
    <property type="term" value="F:manganese ion binding"/>
    <property type="evidence" value="ECO:0007669"/>
    <property type="project" value="UniProtKB-UniRule"/>
</dbReference>
<dbReference type="GO" id="GO:0009231">
    <property type="term" value="P:riboflavin biosynthetic process"/>
    <property type="evidence" value="ECO:0007669"/>
    <property type="project" value="UniProtKB-UniRule"/>
</dbReference>
<dbReference type="FunFam" id="3.90.870.10:FF:000002">
    <property type="entry name" value="3,4-dihydroxy-2-butanone 4-phosphate synthase"/>
    <property type="match status" value="1"/>
</dbReference>
<dbReference type="Gene3D" id="3.90.870.10">
    <property type="entry name" value="DHBP synthase"/>
    <property type="match status" value="1"/>
</dbReference>
<dbReference type="HAMAP" id="MF_00180">
    <property type="entry name" value="RibB"/>
    <property type="match status" value="1"/>
</dbReference>
<dbReference type="InterPro" id="IPR017945">
    <property type="entry name" value="DHBP_synth_RibB-like_a/b_dom"/>
</dbReference>
<dbReference type="InterPro" id="IPR000422">
    <property type="entry name" value="DHBP_synthase_RibB"/>
</dbReference>
<dbReference type="NCBIfam" id="TIGR00506">
    <property type="entry name" value="ribB"/>
    <property type="match status" value="1"/>
</dbReference>
<dbReference type="PANTHER" id="PTHR21327:SF38">
    <property type="entry name" value="3,4-DIHYDROXY-2-BUTANONE 4-PHOSPHATE SYNTHASE"/>
    <property type="match status" value="1"/>
</dbReference>
<dbReference type="PANTHER" id="PTHR21327">
    <property type="entry name" value="GTP CYCLOHYDROLASE II-RELATED"/>
    <property type="match status" value="1"/>
</dbReference>
<dbReference type="Pfam" id="PF00926">
    <property type="entry name" value="DHBP_synthase"/>
    <property type="match status" value="1"/>
</dbReference>
<dbReference type="SUPFAM" id="SSF55821">
    <property type="entry name" value="YrdC/RibB"/>
    <property type="match status" value="1"/>
</dbReference>
<accession>A7GHE0</accession>
<reference key="1">
    <citation type="submission" date="2007-06" db="EMBL/GenBank/DDBJ databases">
        <authorList>
            <person name="Brinkac L.M."/>
            <person name="Daugherty S."/>
            <person name="Dodson R.J."/>
            <person name="Madupu R."/>
            <person name="Brown J.L."/>
            <person name="Bruce D."/>
            <person name="Detter C."/>
            <person name="Munk C."/>
            <person name="Smith L.A."/>
            <person name="Smith T.J."/>
            <person name="White O."/>
            <person name="Brettin T.S."/>
        </authorList>
    </citation>
    <scope>NUCLEOTIDE SEQUENCE [LARGE SCALE GENOMIC DNA]</scope>
    <source>
        <strain>Langeland / NCTC 10281 / Type F</strain>
    </source>
</reference>
<gene>
    <name evidence="1" type="primary">ribB</name>
    <name type="ordered locus">CLI_2975</name>
</gene>
<name>RIBB_CLOBL</name>
<keyword id="KW-0456">Lyase</keyword>
<keyword id="KW-0460">Magnesium</keyword>
<keyword id="KW-0464">Manganese</keyword>
<keyword id="KW-0479">Metal-binding</keyword>
<keyword id="KW-0686">Riboflavin biosynthesis</keyword>
<organism>
    <name type="scientific">Clostridium botulinum (strain Langeland / NCTC 10281 / Type F)</name>
    <dbReference type="NCBI Taxonomy" id="441772"/>
    <lineage>
        <taxon>Bacteria</taxon>
        <taxon>Bacillati</taxon>
        <taxon>Bacillota</taxon>
        <taxon>Clostridia</taxon>
        <taxon>Eubacteriales</taxon>
        <taxon>Clostridiaceae</taxon>
        <taxon>Clostridium</taxon>
    </lineage>
</organism>
<protein>
    <recommendedName>
        <fullName evidence="1">3,4-dihydroxy-2-butanone 4-phosphate synthase</fullName>
        <shortName evidence="1">DHBP synthase</shortName>
        <ecNumber evidence="1">4.1.99.12</ecNumber>
    </recommendedName>
</protein>
<sequence length="213" mass="23232">MNESLLTQFGNSLTRVEKALENLKNGKGVLLVDDENRENEGDLIFPAETITVPQMAMLIRECSGIVCLCLTDEKVKKLGLTQMVSNNTCTYETAFTISIEAKEGVTTGVSAADRVTTILTAVKDDCKPEDLCHPGHVFPLRARAGGVLTRPGHTEGTVDLMRLAGYNPAGILCELTNPDGTMARLPQIINFAKKHNLTILSIEDIIKYKEIVT</sequence>